<feature type="chain" id="PRO_1000016792" description="Queuine tRNA-ribosyltransferase">
    <location>
        <begin position="1"/>
        <end position="367"/>
    </location>
</feature>
<feature type="region of interest" description="RNA binding" evidence="1">
    <location>
        <begin position="246"/>
        <end position="252"/>
    </location>
</feature>
<feature type="active site" description="Proton acceptor" evidence="1">
    <location>
        <position position="92"/>
    </location>
</feature>
<feature type="active site" description="Nucleophile" evidence="1">
    <location>
        <position position="265"/>
    </location>
</feature>
<feature type="binding site" evidence="1">
    <location>
        <begin position="92"/>
        <end position="96"/>
    </location>
    <ligand>
        <name>substrate</name>
    </ligand>
</feature>
<feature type="binding site" evidence="1">
    <location>
        <position position="146"/>
    </location>
    <ligand>
        <name>substrate</name>
    </ligand>
</feature>
<feature type="binding site" evidence="1">
    <location>
        <position position="188"/>
    </location>
    <ligand>
        <name>substrate</name>
    </ligand>
</feature>
<feature type="binding site" evidence="1">
    <location>
        <position position="215"/>
    </location>
    <ligand>
        <name>substrate</name>
    </ligand>
</feature>
<feature type="binding site" evidence="1">
    <location>
        <position position="303"/>
    </location>
    <ligand>
        <name>Zn(2+)</name>
        <dbReference type="ChEBI" id="CHEBI:29105"/>
    </ligand>
</feature>
<feature type="binding site" evidence="1">
    <location>
        <position position="305"/>
    </location>
    <ligand>
        <name>Zn(2+)</name>
        <dbReference type="ChEBI" id="CHEBI:29105"/>
    </ligand>
</feature>
<feature type="binding site" evidence="1">
    <location>
        <position position="308"/>
    </location>
    <ligand>
        <name>Zn(2+)</name>
        <dbReference type="ChEBI" id="CHEBI:29105"/>
    </ligand>
</feature>
<feature type="binding site" evidence="1">
    <location>
        <position position="334"/>
    </location>
    <ligand>
        <name>Zn(2+)</name>
        <dbReference type="ChEBI" id="CHEBI:29105"/>
    </ligand>
</feature>
<keyword id="KW-0328">Glycosyltransferase</keyword>
<keyword id="KW-0479">Metal-binding</keyword>
<keyword id="KW-0671">Queuosine biosynthesis</keyword>
<keyword id="KW-1185">Reference proteome</keyword>
<keyword id="KW-0808">Transferase</keyword>
<keyword id="KW-0819">tRNA processing</keyword>
<keyword id="KW-0862">Zinc</keyword>
<sequence length="367" mass="41484">MTVMKFDLIKKEGKARRGKITFPRGDIQTPAFMPVGTYGAVKSLSPVELKEMGAEIILGNTFHLWLRPGTEIIKKHGSLHGFNGWDKPILTDSGGFQVFSLGKMRKLTEEGVTFKSPVNSSKVFLSPEISMQVQRDLGSDIVMCFDECTPYPATEKEAKESMELSMRWAKRSKEAHGDNPSALFGIIQGGMYEHLRDESLAKLKEIDFDGFAIGGLSVGEPKEDMIRILDHTAHQMPEDKPRYLMGVGTPKDLVEAVYRGVDMFDCVMPSRNARNGHIFTSEGVIKIRNSKYKDDTSPLDPNCDCYTCKNFTKSYLHHLDKTKEILGSRLNTIHNLTFYQNLMKSIRKALDEGRFSEFRKEFLASYK</sequence>
<evidence type="ECO:0000255" key="1">
    <source>
        <dbReference type="HAMAP-Rule" id="MF_00168"/>
    </source>
</evidence>
<organism>
    <name type="scientific">Francisella tularensis subsp. holarctica (strain LVS)</name>
    <dbReference type="NCBI Taxonomy" id="376619"/>
    <lineage>
        <taxon>Bacteria</taxon>
        <taxon>Pseudomonadati</taxon>
        <taxon>Pseudomonadota</taxon>
        <taxon>Gammaproteobacteria</taxon>
        <taxon>Thiotrichales</taxon>
        <taxon>Francisellaceae</taxon>
        <taxon>Francisella</taxon>
    </lineage>
</organism>
<accession>Q2A3Y7</accession>
<gene>
    <name evidence="1" type="primary">tgt</name>
    <name type="ordered locus">FTL_0843</name>
</gene>
<reference key="1">
    <citation type="submission" date="2006-03" db="EMBL/GenBank/DDBJ databases">
        <title>Complete genome sequence of Francisella tularensis LVS (Live Vaccine Strain).</title>
        <authorList>
            <person name="Chain P."/>
            <person name="Larimer F."/>
            <person name="Land M."/>
            <person name="Stilwagen S."/>
            <person name="Larsson P."/>
            <person name="Bearden S."/>
            <person name="Chu M."/>
            <person name="Oyston P."/>
            <person name="Forsman M."/>
            <person name="Andersson S."/>
            <person name="Lindler L."/>
            <person name="Titball R."/>
            <person name="Garcia E."/>
        </authorList>
    </citation>
    <scope>NUCLEOTIDE SEQUENCE [LARGE SCALE GENOMIC DNA]</scope>
    <source>
        <strain>LVS</strain>
    </source>
</reference>
<protein>
    <recommendedName>
        <fullName evidence="1">Queuine tRNA-ribosyltransferase</fullName>
        <ecNumber evidence="1">2.4.2.29</ecNumber>
    </recommendedName>
    <alternativeName>
        <fullName evidence="1">Guanine insertion enzyme</fullName>
    </alternativeName>
    <alternativeName>
        <fullName evidence="1">tRNA-guanine transglycosylase</fullName>
    </alternativeName>
</protein>
<dbReference type="EC" id="2.4.2.29" evidence="1"/>
<dbReference type="EMBL" id="AM233362">
    <property type="protein sequence ID" value="CAJ79282.1"/>
    <property type="molecule type" value="Genomic_DNA"/>
</dbReference>
<dbReference type="RefSeq" id="WP_003015439.1">
    <property type="nucleotide sequence ID" value="NZ_CP009694.1"/>
</dbReference>
<dbReference type="SMR" id="Q2A3Y7"/>
<dbReference type="KEGG" id="ftl:FTL_0843"/>
<dbReference type="UniPathway" id="UPA00392"/>
<dbReference type="Proteomes" id="UP000001944">
    <property type="component" value="Chromosome"/>
</dbReference>
<dbReference type="GO" id="GO:0005829">
    <property type="term" value="C:cytosol"/>
    <property type="evidence" value="ECO:0007669"/>
    <property type="project" value="TreeGrafter"/>
</dbReference>
<dbReference type="GO" id="GO:0046872">
    <property type="term" value="F:metal ion binding"/>
    <property type="evidence" value="ECO:0007669"/>
    <property type="project" value="UniProtKB-KW"/>
</dbReference>
<dbReference type="GO" id="GO:0008479">
    <property type="term" value="F:tRNA-guanosine(34) queuine transglycosylase activity"/>
    <property type="evidence" value="ECO:0007669"/>
    <property type="project" value="UniProtKB-UniRule"/>
</dbReference>
<dbReference type="GO" id="GO:0008616">
    <property type="term" value="P:queuosine biosynthetic process"/>
    <property type="evidence" value="ECO:0007669"/>
    <property type="project" value="UniProtKB-UniRule"/>
</dbReference>
<dbReference type="GO" id="GO:0002099">
    <property type="term" value="P:tRNA wobble guanine modification"/>
    <property type="evidence" value="ECO:0007669"/>
    <property type="project" value="TreeGrafter"/>
</dbReference>
<dbReference type="GO" id="GO:0101030">
    <property type="term" value="P:tRNA-guanine transglycosylation"/>
    <property type="evidence" value="ECO:0007669"/>
    <property type="project" value="InterPro"/>
</dbReference>
<dbReference type="FunFam" id="3.20.20.105:FF:000001">
    <property type="entry name" value="Queuine tRNA-ribosyltransferase"/>
    <property type="match status" value="1"/>
</dbReference>
<dbReference type="Gene3D" id="3.20.20.105">
    <property type="entry name" value="Queuine tRNA-ribosyltransferase-like"/>
    <property type="match status" value="1"/>
</dbReference>
<dbReference type="HAMAP" id="MF_00168">
    <property type="entry name" value="Q_tRNA_Tgt"/>
    <property type="match status" value="1"/>
</dbReference>
<dbReference type="InterPro" id="IPR050076">
    <property type="entry name" value="ArchSynthase1/Queuine_TRR"/>
</dbReference>
<dbReference type="InterPro" id="IPR004803">
    <property type="entry name" value="TGT"/>
</dbReference>
<dbReference type="InterPro" id="IPR036511">
    <property type="entry name" value="TGT-like_sf"/>
</dbReference>
<dbReference type="InterPro" id="IPR002616">
    <property type="entry name" value="tRNA_ribo_trans-like"/>
</dbReference>
<dbReference type="NCBIfam" id="TIGR00430">
    <property type="entry name" value="Q_tRNA_tgt"/>
    <property type="match status" value="1"/>
</dbReference>
<dbReference type="NCBIfam" id="TIGR00449">
    <property type="entry name" value="tgt_general"/>
    <property type="match status" value="1"/>
</dbReference>
<dbReference type="PANTHER" id="PTHR46499">
    <property type="entry name" value="QUEUINE TRNA-RIBOSYLTRANSFERASE"/>
    <property type="match status" value="1"/>
</dbReference>
<dbReference type="PANTHER" id="PTHR46499:SF1">
    <property type="entry name" value="QUEUINE TRNA-RIBOSYLTRANSFERASE"/>
    <property type="match status" value="1"/>
</dbReference>
<dbReference type="Pfam" id="PF01702">
    <property type="entry name" value="TGT"/>
    <property type="match status" value="1"/>
</dbReference>
<dbReference type="SUPFAM" id="SSF51713">
    <property type="entry name" value="tRNA-guanine transglycosylase"/>
    <property type="match status" value="1"/>
</dbReference>
<comment type="function">
    <text evidence="1">Catalyzes the base-exchange of a guanine (G) residue with the queuine precursor 7-aminomethyl-7-deazaguanine (PreQ1) at position 34 (anticodon wobble position) in tRNAs with GU(N) anticodons (tRNA-Asp, -Asn, -His and -Tyr). Catalysis occurs through a double-displacement mechanism. The nucleophile active site attacks the C1' of nucleotide 34 to detach the guanine base from the RNA, forming a covalent enzyme-RNA intermediate. The proton acceptor active site deprotonates the incoming PreQ1, allowing a nucleophilic attack on the C1' of the ribose to form the product. After dissociation, two additional enzymatic reactions on the tRNA convert PreQ1 to queuine (Q), resulting in the hypermodified nucleoside queuosine (7-(((4,5-cis-dihydroxy-2-cyclopenten-1-yl)amino)methyl)-7-deazaguanosine).</text>
</comment>
<comment type="catalytic activity">
    <reaction evidence="1">
        <text>7-aminomethyl-7-carbaguanine + guanosine(34) in tRNA = 7-aminomethyl-7-carbaguanosine(34) in tRNA + guanine</text>
        <dbReference type="Rhea" id="RHEA:24104"/>
        <dbReference type="Rhea" id="RHEA-COMP:10341"/>
        <dbReference type="Rhea" id="RHEA-COMP:10342"/>
        <dbReference type="ChEBI" id="CHEBI:16235"/>
        <dbReference type="ChEBI" id="CHEBI:58703"/>
        <dbReference type="ChEBI" id="CHEBI:74269"/>
        <dbReference type="ChEBI" id="CHEBI:82833"/>
        <dbReference type="EC" id="2.4.2.29"/>
    </reaction>
</comment>
<comment type="cofactor">
    <cofactor evidence="1">
        <name>Zn(2+)</name>
        <dbReference type="ChEBI" id="CHEBI:29105"/>
    </cofactor>
    <text evidence="1">Binds 1 zinc ion per subunit.</text>
</comment>
<comment type="pathway">
    <text evidence="1">tRNA modification; tRNA-queuosine biosynthesis.</text>
</comment>
<comment type="subunit">
    <text evidence="1">Homodimer. Within each dimer, one monomer is responsible for RNA recognition and catalysis, while the other monomer binds to the replacement base PreQ1.</text>
</comment>
<comment type="similarity">
    <text evidence="1">Belongs to the queuine tRNA-ribosyltransferase family.</text>
</comment>
<name>TGT_FRATH</name>
<proteinExistence type="inferred from homology"/>